<comment type="function">
    <text evidence="1">Functions in the N-end rule pathway of protein degradation where it conjugates Leu, Phe and, less efficiently, Met from aminoacyl-tRNAs to the N-termini of proteins containing an N-terminal arginine or lysine.</text>
</comment>
<comment type="catalytic activity">
    <reaction evidence="1">
        <text>N-terminal L-lysyl-[protein] + L-leucyl-tRNA(Leu) = N-terminal L-leucyl-L-lysyl-[protein] + tRNA(Leu) + H(+)</text>
        <dbReference type="Rhea" id="RHEA:12340"/>
        <dbReference type="Rhea" id="RHEA-COMP:9613"/>
        <dbReference type="Rhea" id="RHEA-COMP:9622"/>
        <dbReference type="Rhea" id="RHEA-COMP:12670"/>
        <dbReference type="Rhea" id="RHEA-COMP:12671"/>
        <dbReference type="ChEBI" id="CHEBI:15378"/>
        <dbReference type="ChEBI" id="CHEBI:65249"/>
        <dbReference type="ChEBI" id="CHEBI:78442"/>
        <dbReference type="ChEBI" id="CHEBI:78494"/>
        <dbReference type="ChEBI" id="CHEBI:133043"/>
        <dbReference type="EC" id="2.3.2.6"/>
    </reaction>
</comment>
<comment type="catalytic activity">
    <reaction evidence="1">
        <text>N-terminal L-arginyl-[protein] + L-leucyl-tRNA(Leu) = N-terminal L-leucyl-L-arginyl-[protein] + tRNA(Leu) + H(+)</text>
        <dbReference type="Rhea" id="RHEA:50416"/>
        <dbReference type="Rhea" id="RHEA-COMP:9613"/>
        <dbReference type="Rhea" id="RHEA-COMP:9622"/>
        <dbReference type="Rhea" id="RHEA-COMP:12672"/>
        <dbReference type="Rhea" id="RHEA-COMP:12673"/>
        <dbReference type="ChEBI" id="CHEBI:15378"/>
        <dbReference type="ChEBI" id="CHEBI:64719"/>
        <dbReference type="ChEBI" id="CHEBI:78442"/>
        <dbReference type="ChEBI" id="CHEBI:78494"/>
        <dbReference type="ChEBI" id="CHEBI:133044"/>
        <dbReference type="EC" id="2.3.2.6"/>
    </reaction>
</comment>
<comment type="catalytic activity">
    <reaction evidence="1">
        <text>L-phenylalanyl-tRNA(Phe) + an N-terminal L-alpha-aminoacyl-[protein] = an N-terminal L-phenylalanyl-L-alpha-aminoacyl-[protein] + tRNA(Phe)</text>
        <dbReference type="Rhea" id="RHEA:43632"/>
        <dbReference type="Rhea" id="RHEA-COMP:9668"/>
        <dbReference type="Rhea" id="RHEA-COMP:9699"/>
        <dbReference type="Rhea" id="RHEA-COMP:10636"/>
        <dbReference type="Rhea" id="RHEA-COMP:10637"/>
        <dbReference type="ChEBI" id="CHEBI:78442"/>
        <dbReference type="ChEBI" id="CHEBI:78531"/>
        <dbReference type="ChEBI" id="CHEBI:78597"/>
        <dbReference type="ChEBI" id="CHEBI:83561"/>
        <dbReference type="EC" id="2.3.2.6"/>
    </reaction>
</comment>
<comment type="subcellular location">
    <subcellularLocation>
        <location evidence="1">Cytoplasm</location>
    </subcellularLocation>
</comment>
<comment type="similarity">
    <text evidence="1">Belongs to the L/F-transferase family.</text>
</comment>
<evidence type="ECO:0000255" key="1">
    <source>
        <dbReference type="HAMAP-Rule" id="MF_00688"/>
    </source>
</evidence>
<feature type="chain" id="PRO_1000131941" description="Leucyl/phenylalanyl-tRNA--protein transferase">
    <location>
        <begin position="1"/>
        <end position="204"/>
    </location>
</feature>
<reference key="1">
    <citation type="journal article" date="2010" name="Appl. Environ. Microbiol.">
        <title>Conserved symbiotic plasmid DNA sequences in the multireplicon pangenomic structure of Rhizobium etli.</title>
        <authorList>
            <person name="Gonzalez V."/>
            <person name="Acosta J.L."/>
            <person name="Santamaria R.I."/>
            <person name="Bustos P."/>
            <person name="Fernandez J.L."/>
            <person name="Hernandez Gonzalez I.L."/>
            <person name="Diaz R."/>
            <person name="Flores M."/>
            <person name="Palacios R."/>
            <person name="Mora J."/>
            <person name="Davila G."/>
        </authorList>
    </citation>
    <scope>NUCLEOTIDE SEQUENCE [LARGE SCALE GENOMIC DNA]</scope>
    <source>
        <strain>CIAT 652</strain>
    </source>
</reference>
<gene>
    <name evidence="1" type="primary">aat</name>
    <name type="ordered locus">RHECIAT_CH0001954</name>
</gene>
<organism>
    <name type="scientific">Rhizobium etli (strain CIAT 652)</name>
    <dbReference type="NCBI Taxonomy" id="491916"/>
    <lineage>
        <taxon>Bacteria</taxon>
        <taxon>Pseudomonadati</taxon>
        <taxon>Pseudomonadota</taxon>
        <taxon>Alphaproteobacteria</taxon>
        <taxon>Hyphomicrobiales</taxon>
        <taxon>Rhizobiaceae</taxon>
        <taxon>Rhizobium/Agrobacterium group</taxon>
        <taxon>Rhizobium</taxon>
    </lineage>
</organism>
<keyword id="KW-0012">Acyltransferase</keyword>
<keyword id="KW-0963">Cytoplasm</keyword>
<keyword id="KW-0808">Transferase</keyword>
<protein>
    <recommendedName>
        <fullName evidence="1">Leucyl/phenylalanyl-tRNA--protein transferase</fullName>
        <ecNumber evidence="1">2.3.2.6</ecNumber>
    </recommendedName>
    <alternativeName>
        <fullName evidence="1">L/F-transferase</fullName>
    </alternativeName>
    <alternativeName>
        <fullName evidence="1">Leucyltransferase</fullName>
    </alternativeName>
    <alternativeName>
        <fullName evidence="1">Phenyalanyltransferase</fullName>
    </alternativeName>
</protein>
<sequence length="204" mass="22741">MAGSRRKSPGITPDILLRAYSIGLFPMAESADDPEIFWVEPELRGVLPLDHFHISKSLAKTVRRNPFEIRFDHAFESVIAACAEETSGRPSTWINQTIRSLYSTLFDMGHAHTVEAWHGDELVGGLYGVSLGSAFFGESMFSRRTDASKICLVHLVDRLRNKGFTLLDTQFTTEHLKTFGAIDVPKADYALLLAAAMESPHLKF</sequence>
<name>LFTR_RHIE6</name>
<dbReference type="EC" id="2.3.2.6" evidence="1"/>
<dbReference type="EMBL" id="CP001074">
    <property type="protein sequence ID" value="ACE90920.1"/>
    <property type="molecule type" value="Genomic_DNA"/>
</dbReference>
<dbReference type="SMR" id="B3PXY4"/>
<dbReference type="KEGG" id="rec:RHECIAT_CH0001954"/>
<dbReference type="eggNOG" id="COG2360">
    <property type="taxonomic scope" value="Bacteria"/>
</dbReference>
<dbReference type="HOGENOM" id="CLU_075045_1_1_5"/>
<dbReference type="Proteomes" id="UP000008817">
    <property type="component" value="Chromosome"/>
</dbReference>
<dbReference type="GO" id="GO:0005737">
    <property type="term" value="C:cytoplasm"/>
    <property type="evidence" value="ECO:0007669"/>
    <property type="project" value="UniProtKB-SubCell"/>
</dbReference>
<dbReference type="GO" id="GO:0008914">
    <property type="term" value="F:leucyl-tRNA--protein transferase activity"/>
    <property type="evidence" value="ECO:0007669"/>
    <property type="project" value="UniProtKB-UniRule"/>
</dbReference>
<dbReference type="GO" id="GO:0030163">
    <property type="term" value="P:protein catabolic process"/>
    <property type="evidence" value="ECO:0007669"/>
    <property type="project" value="UniProtKB-UniRule"/>
</dbReference>
<dbReference type="FunFam" id="3.40.630.70:FF:000001">
    <property type="entry name" value="Leucyl/phenylalanyl-tRNA--protein transferase"/>
    <property type="match status" value="1"/>
</dbReference>
<dbReference type="Gene3D" id="3.40.630.70">
    <property type="entry name" value="Leucyl/phenylalanyl-tRNA-protein transferase, C-terminal domain"/>
    <property type="match status" value="1"/>
</dbReference>
<dbReference type="HAMAP" id="MF_00688">
    <property type="entry name" value="Leu_Phe_trans"/>
    <property type="match status" value="1"/>
</dbReference>
<dbReference type="InterPro" id="IPR016181">
    <property type="entry name" value="Acyl_CoA_acyltransferase"/>
</dbReference>
<dbReference type="InterPro" id="IPR004616">
    <property type="entry name" value="Leu/Phe-tRNA_Trfase"/>
</dbReference>
<dbReference type="InterPro" id="IPR042203">
    <property type="entry name" value="Leu/Phe-tRNA_Trfase_C"/>
</dbReference>
<dbReference type="NCBIfam" id="TIGR00667">
    <property type="entry name" value="aat"/>
    <property type="match status" value="1"/>
</dbReference>
<dbReference type="PANTHER" id="PTHR30098">
    <property type="entry name" value="LEUCYL/PHENYLALANYL-TRNA--PROTEIN TRANSFERASE"/>
    <property type="match status" value="1"/>
</dbReference>
<dbReference type="PANTHER" id="PTHR30098:SF2">
    <property type="entry name" value="LEUCYL_PHENYLALANYL-TRNA--PROTEIN TRANSFERASE"/>
    <property type="match status" value="1"/>
</dbReference>
<dbReference type="Pfam" id="PF03588">
    <property type="entry name" value="Leu_Phe_trans"/>
    <property type="match status" value="1"/>
</dbReference>
<dbReference type="SUPFAM" id="SSF55729">
    <property type="entry name" value="Acyl-CoA N-acyltransferases (Nat)"/>
    <property type="match status" value="1"/>
</dbReference>
<accession>B3PXY4</accession>
<proteinExistence type="inferred from homology"/>